<keyword id="KW-0496">Mitochondrion</keyword>
<keyword id="KW-0687">Ribonucleoprotein</keyword>
<keyword id="KW-0689">Ribosomal protein</keyword>
<organism>
    <name type="scientific">Brassica napus</name>
    <name type="common">Rape</name>
    <dbReference type="NCBI Taxonomy" id="3708"/>
    <lineage>
        <taxon>Eukaryota</taxon>
        <taxon>Viridiplantae</taxon>
        <taxon>Streptophyta</taxon>
        <taxon>Embryophyta</taxon>
        <taxon>Tracheophyta</taxon>
        <taxon>Spermatophyta</taxon>
        <taxon>Magnoliopsida</taxon>
        <taxon>eudicotyledons</taxon>
        <taxon>Gunneridae</taxon>
        <taxon>Pentapetalae</taxon>
        <taxon>rosids</taxon>
        <taxon>malvids</taxon>
        <taxon>Brassicales</taxon>
        <taxon>Brassicaceae</taxon>
        <taxon>Brassiceae</taxon>
        <taxon>Brassica</taxon>
    </lineage>
</organism>
<dbReference type="EMBL" id="X63653">
    <property type="protein sequence ID" value="CAA45189.1"/>
    <property type="molecule type" value="Genomic_DNA"/>
</dbReference>
<dbReference type="PIR" id="S36914">
    <property type="entry name" value="S36914"/>
</dbReference>
<dbReference type="SMR" id="P49389"/>
<dbReference type="GO" id="GO:0005739">
    <property type="term" value="C:mitochondrion"/>
    <property type="evidence" value="ECO:0007669"/>
    <property type="project" value="UniProtKB-SubCell"/>
</dbReference>
<dbReference type="GO" id="GO:1990904">
    <property type="term" value="C:ribonucleoprotein complex"/>
    <property type="evidence" value="ECO:0007669"/>
    <property type="project" value="UniProtKB-KW"/>
</dbReference>
<dbReference type="GO" id="GO:0005840">
    <property type="term" value="C:ribosome"/>
    <property type="evidence" value="ECO:0007669"/>
    <property type="project" value="UniProtKB-KW"/>
</dbReference>
<dbReference type="GO" id="GO:0019843">
    <property type="term" value="F:rRNA binding"/>
    <property type="evidence" value="ECO:0007669"/>
    <property type="project" value="InterPro"/>
</dbReference>
<dbReference type="GO" id="GO:0003735">
    <property type="term" value="F:structural constituent of ribosome"/>
    <property type="evidence" value="ECO:0007669"/>
    <property type="project" value="InterPro"/>
</dbReference>
<dbReference type="GO" id="GO:0006412">
    <property type="term" value="P:translation"/>
    <property type="evidence" value="ECO:0007669"/>
    <property type="project" value="InterPro"/>
</dbReference>
<dbReference type="CDD" id="cd01433">
    <property type="entry name" value="Ribosomal_L16_L10e"/>
    <property type="match status" value="1"/>
</dbReference>
<dbReference type="FunFam" id="3.90.1170.10:FF:000007">
    <property type="entry name" value="Ribosomal protein L16"/>
    <property type="match status" value="1"/>
</dbReference>
<dbReference type="Gene3D" id="3.90.1170.10">
    <property type="entry name" value="Ribosomal protein L10e/L16"/>
    <property type="match status" value="1"/>
</dbReference>
<dbReference type="InterPro" id="IPR047873">
    <property type="entry name" value="Ribosomal_uL16"/>
</dbReference>
<dbReference type="InterPro" id="IPR000114">
    <property type="entry name" value="Ribosomal_uL16_bact-type"/>
</dbReference>
<dbReference type="InterPro" id="IPR020798">
    <property type="entry name" value="Ribosomal_uL16_CS"/>
</dbReference>
<dbReference type="InterPro" id="IPR016180">
    <property type="entry name" value="Ribosomal_uL16_dom"/>
</dbReference>
<dbReference type="InterPro" id="IPR036920">
    <property type="entry name" value="Ribosomal_uL16_sf"/>
</dbReference>
<dbReference type="NCBIfam" id="TIGR01164">
    <property type="entry name" value="rplP_bact"/>
    <property type="match status" value="1"/>
</dbReference>
<dbReference type="PANTHER" id="PTHR12220">
    <property type="entry name" value="50S/60S RIBOSOMAL PROTEIN L16"/>
    <property type="match status" value="1"/>
</dbReference>
<dbReference type="PANTHER" id="PTHR12220:SF24">
    <property type="entry name" value="LARGE RIBOSOMAL SUBUNIT PROTEIN UL16M"/>
    <property type="match status" value="1"/>
</dbReference>
<dbReference type="Pfam" id="PF00252">
    <property type="entry name" value="Ribosomal_L16"/>
    <property type="match status" value="1"/>
</dbReference>
<dbReference type="PRINTS" id="PR00060">
    <property type="entry name" value="RIBOSOMALL16"/>
</dbReference>
<dbReference type="SUPFAM" id="SSF54686">
    <property type="entry name" value="Ribosomal protein L16p/L10e"/>
    <property type="match status" value="1"/>
</dbReference>
<dbReference type="PROSITE" id="PS00586">
    <property type="entry name" value="RIBOSOMAL_L16_1"/>
    <property type="match status" value="1"/>
</dbReference>
<dbReference type="PROSITE" id="PS00701">
    <property type="entry name" value="RIBOSOMAL_L16_2"/>
    <property type="match status" value="1"/>
</dbReference>
<sequence>MYLTRKSIMLLRKYLLVTESQVSKCGFHIVKKKGDVLYPKRTKYSKGRCSRGCKPDGTKLGFGRYGTKSCRAGRLSYRAIEAARRATIGHSFRRAMSGQFRRNCKIWVRVLADLPITGKPAEVRMGRGKGNPTGWIARVSTGQIPFEMDGVSLANARQAARLAAHKPCSSTKFVQWS</sequence>
<evidence type="ECO:0000305" key="1"/>
<name>RM16_BRANA</name>
<gene>
    <name type="primary">RPL16</name>
</gene>
<accession>P49389</accession>
<accession>Q96014</accession>
<reference key="1">
    <citation type="journal article" date="1993" name="Curr. Genet.">
        <title>Genes for ribosomal proteins S3, L16, L5 and S14 are clustered in the mitochondrial genome of Brassica napus L.</title>
        <authorList>
            <person name="Ye F."/>
            <person name="Bernhardt J."/>
            <person name="Abel W.O."/>
        </authorList>
    </citation>
    <scope>NUCLEOTIDE SEQUENCE [GENOMIC DNA]</scope>
    <source>
        <tissue>Leaf</tissue>
    </source>
</reference>
<geneLocation type="mitochondrion"/>
<proteinExistence type="inferred from homology"/>
<protein>
    <recommendedName>
        <fullName evidence="1">Large ribosomal subunit protein uL16m</fullName>
    </recommendedName>
    <alternativeName>
        <fullName>60S ribosomal protein L16, mitochondrial</fullName>
    </alternativeName>
</protein>
<comment type="subcellular location">
    <subcellularLocation>
        <location>Mitochondrion</location>
    </subcellularLocation>
</comment>
<comment type="similarity">
    <text evidence="1">Belongs to the universal ribosomal protein uL16 family.</text>
</comment>
<feature type="chain" id="PRO_0000062322" description="Large ribosomal subunit protein uL16m">
    <location>
        <begin position="1"/>
        <end position="177"/>
    </location>
</feature>